<reference key="1">
    <citation type="journal article" date="2010" name="Genome Biol. Evol.">
        <title>Continuing evolution of Burkholderia mallei through genome reduction and large-scale rearrangements.</title>
        <authorList>
            <person name="Losada L."/>
            <person name="Ronning C.M."/>
            <person name="DeShazer D."/>
            <person name="Woods D."/>
            <person name="Fedorova N."/>
            <person name="Kim H.S."/>
            <person name="Shabalina S.A."/>
            <person name="Pearson T.R."/>
            <person name="Brinkac L."/>
            <person name="Tan P."/>
            <person name="Nandi T."/>
            <person name="Crabtree J."/>
            <person name="Badger J."/>
            <person name="Beckstrom-Sternberg S."/>
            <person name="Saqib M."/>
            <person name="Schutzer S.E."/>
            <person name="Keim P."/>
            <person name="Nierman W.C."/>
        </authorList>
    </citation>
    <scope>NUCLEOTIDE SEQUENCE [LARGE SCALE GENOMIC DNA]</scope>
    <source>
        <strain>SAVP1</strain>
    </source>
</reference>
<keyword id="KW-0687">Ribonucleoprotein</keyword>
<keyword id="KW-0689">Ribosomal protein</keyword>
<accession>A1V569</accession>
<name>RS2_BURMS</name>
<protein>
    <recommendedName>
        <fullName evidence="1">Small ribosomal subunit protein uS2</fullName>
    </recommendedName>
    <alternativeName>
        <fullName evidence="2">30S ribosomal protein S2</fullName>
    </alternativeName>
</protein>
<gene>
    <name evidence="1" type="primary">rpsB</name>
    <name type="ordered locus">BMASAVP1_A2056</name>
</gene>
<comment type="similarity">
    <text evidence="1">Belongs to the universal ribosomal protein uS2 family.</text>
</comment>
<proteinExistence type="inferred from homology"/>
<feature type="chain" id="PRO_1000003911" description="Small ribosomal subunit protein uS2">
    <location>
        <begin position="1"/>
        <end position="246"/>
    </location>
</feature>
<dbReference type="EMBL" id="CP000526">
    <property type="protein sequence ID" value="ABM50057.1"/>
    <property type="molecule type" value="Genomic_DNA"/>
</dbReference>
<dbReference type="RefSeq" id="WP_004193246.1">
    <property type="nucleotide sequence ID" value="NC_008785.1"/>
</dbReference>
<dbReference type="SMR" id="A1V569"/>
<dbReference type="GeneID" id="93060700"/>
<dbReference type="KEGG" id="bmv:BMASAVP1_A2056"/>
<dbReference type="HOGENOM" id="CLU_040318_1_2_4"/>
<dbReference type="GO" id="GO:0022627">
    <property type="term" value="C:cytosolic small ribosomal subunit"/>
    <property type="evidence" value="ECO:0007669"/>
    <property type="project" value="TreeGrafter"/>
</dbReference>
<dbReference type="GO" id="GO:0003735">
    <property type="term" value="F:structural constituent of ribosome"/>
    <property type="evidence" value="ECO:0007669"/>
    <property type="project" value="InterPro"/>
</dbReference>
<dbReference type="GO" id="GO:0006412">
    <property type="term" value="P:translation"/>
    <property type="evidence" value="ECO:0007669"/>
    <property type="project" value="UniProtKB-UniRule"/>
</dbReference>
<dbReference type="CDD" id="cd01425">
    <property type="entry name" value="RPS2"/>
    <property type="match status" value="1"/>
</dbReference>
<dbReference type="FunFam" id="1.10.287.610:FF:000001">
    <property type="entry name" value="30S ribosomal protein S2"/>
    <property type="match status" value="1"/>
</dbReference>
<dbReference type="Gene3D" id="3.40.50.10490">
    <property type="entry name" value="Glucose-6-phosphate isomerase like protein, domain 1"/>
    <property type="match status" value="1"/>
</dbReference>
<dbReference type="Gene3D" id="1.10.287.610">
    <property type="entry name" value="Helix hairpin bin"/>
    <property type="match status" value="1"/>
</dbReference>
<dbReference type="HAMAP" id="MF_00291_B">
    <property type="entry name" value="Ribosomal_uS2_B"/>
    <property type="match status" value="1"/>
</dbReference>
<dbReference type="InterPro" id="IPR001865">
    <property type="entry name" value="Ribosomal_uS2"/>
</dbReference>
<dbReference type="InterPro" id="IPR005706">
    <property type="entry name" value="Ribosomal_uS2_bac/mit/plastid"/>
</dbReference>
<dbReference type="InterPro" id="IPR018130">
    <property type="entry name" value="Ribosomal_uS2_CS"/>
</dbReference>
<dbReference type="InterPro" id="IPR023591">
    <property type="entry name" value="Ribosomal_uS2_flav_dom_sf"/>
</dbReference>
<dbReference type="NCBIfam" id="TIGR01011">
    <property type="entry name" value="rpsB_bact"/>
    <property type="match status" value="1"/>
</dbReference>
<dbReference type="PANTHER" id="PTHR12534">
    <property type="entry name" value="30S RIBOSOMAL PROTEIN S2 PROKARYOTIC AND ORGANELLAR"/>
    <property type="match status" value="1"/>
</dbReference>
<dbReference type="PANTHER" id="PTHR12534:SF0">
    <property type="entry name" value="SMALL RIBOSOMAL SUBUNIT PROTEIN US2M"/>
    <property type="match status" value="1"/>
</dbReference>
<dbReference type="Pfam" id="PF00318">
    <property type="entry name" value="Ribosomal_S2"/>
    <property type="match status" value="1"/>
</dbReference>
<dbReference type="PRINTS" id="PR00395">
    <property type="entry name" value="RIBOSOMALS2"/>
</dbReference>
<dbReference type="SUPFAM" id="SSF52313">
    <property type="entry name" value="Ribosomal protein S2"/>
    <property type="match status" value="1"/>
</dbReference>
<dbReference type="PROSITE" id="PS00962">
    <property type="entry name" value="RIBOSOMAL_S2_1"/>
    <property type="match status" value="1"/>
</dbReference>
<organism>
    <name type="scientific">Burkholderia mallei (strain SAVP1)</name>
    <dbReference type="NCBI Taxonomy" id="320388"/>
    <lineage>
        <taxon>Bacteria</taxon>
        <taxon>Pseudomonadati</taxon>
        <taxon>Pseudomonadota</taxon>
        <taxon>Betaproteobacteria</taxon>
        <taxon>Burkholderiales</taxon>
        <taxon>Burkholderiaceae</taxon>
        <taxon>Burkholderia</taxon>
        <taxon>pseudomallei group</taxon>
    </lineage>
</organism>
<evidence type="ECO:0000255" key="1">
    <source>
        <dbReference type="HAMAP-Rule" id="MF_00291"/>
    </source>
</evidence>
<evidence type="ECO:0000305" key="2"/>
<sequence length="246" mass="27137">MAITMRQMLEAGVHFGHQTRFWNPKMAPFIFGHRNKIHIINLEKTLPMYNDALKYVRQLAANRGTILFVGTKRQSRDTIAQEALRAGMPYVNARWLGGMLTNFKTLKVSIKRLKDMEAAVEAGELEKMSKKEALLFEREIAKLQKSIGGVKDMGGIPDAIFVVDVGYHKIAVTEANKLGVPVIAVVDTNHSPEGVDYVIPGNDDSSKAVALYAQGVADAILEGRANAVNEVVQAVRGDDEYVEENA</sequence>